<name>LEPA_LEPBA</name>
<feature type="chain" id="PRO_1000092414" description="Elongation factor 4">
    <location>
        <begin position="1"/>
        <end position="601"/>
    </location>
</feature>
<feature type="domain" description="tr-type G">
    <location>
        <begin position="6"/>
        <end position="188"/>
    </location>
</feature>
<feature type="binding site" evidence="1">
    <location>
        <begin position="18"/>
        <end position="23"/>
    </location>
    <ligand>
        <name>GTP</name>
        <dbReference type="ChEBI" id="CHEBI:37565"/>
    </ligand>
</feature>
<feature type="binding site" evidence="1">
    <location>
        <begin position="135"/>
        <end position="138"/>
    </location>
    <ligand>
        <name>GTP</name>
        <dbReference type="ChEBI" id="CHEBI:37565"/>
    </ligand>
</feature>
<organism>
    <name type="scientific">Leptospira biflexa serovar Patoc (strain Patoc 1 / Ames)</name>
    <dbReference type="NCBI Taxonomy" id="355278"/>
    <lineage>
        <taxon>Bacteria</taxon>
        <taxon>Pseudomonadati</taxon>
        <taxon>Spirochaetota</taxon>
        <taxon>Spirochaetia</taxon>
        <taxon>Leptospirales</taxon>
        <taxon>Leptospiraceae</taxon>
        <taxon>Leptospira</taxon>
    </lineage>
</organism>
<evidence type="ECO:0000255" key="1">
    <source>
        <dbReference type="HAMAP-Rule" id="MF_00071"/>
    </source>
</evidence>
<proteinExistence type="inferred from homology"/>
<keyword id="KW-0997">Cell inner membrane</keyword>
<keyword id="KW-1003">Cell membrane</keyword>
<keyword id="KW-0342">GTP-binding</keyword>
<keyword id="KW-0378">Hydrolase</keyword>
<keyword id="KW-0472">Membrane</keyword>
<keyword id="KW-0547">Nucleotide-binding</keyword>
<keyword id="KW-0648">Protein biosynthesis</keyword>
<accession>B0S8S7</accession>
<gene>
    <name evidence="1" type="primary">lepA</name>
    <name type="ordered locus">LBF_1651</name>
</gene>
<protein>
    <recommendedName>
        <fullName evidence="1">Elongation factor 4</fullName>
        <shortName evidence="1">EF-4</shortName>
        <ecNumber evidence="1">3.6.5.n1</ecNumber>
    </recommendedName>
    <alternativeName>
        <fullName evidence="1">Ribosomal back-translocase LepA</fullName>
    </alternativeName>
</protein>
<sequence length="601" mass="67091">MNERQKFTRNFSIIAHVDHGKSTLADRLLEIGLVTDKRTQKNQILDSMDIERERGITIKANNASFDYHAKDGNIYHLNLIDTPGHVDFTYEVSRSLAACEGVLLIVDASQGVEAQTLANLYLAMDLDLRIIPVINKIDLPSADIDKCKLMIEESLGLNPEEAIPISAKTGLNVQEVLEAICYLLPPPVGDVDAPLKALIYDSFFDTYMGVVAKVRLYDGRLKKGEMIHMMNIGRQFTVTEVGINRLSMVACEELQAGDVGYVVAGMKKMGDAKTGDTITHANRQTAEDVKGFKDAKPMVFAGLFPINGEDFDALVDAIEKLKLNDSALTFERENSAALGFGFRVGYLGLLHMEIVQERLEREFNLALITTAPSVKFRITTTKDEVIEVDNPSKWPDPILIGKSEEPFVKATIIAPESYVGNIMSLVIEKRGIHLDTVYLSKDKLQLTYELPLAELIFEFYDKLKSYTKGYASLDYEEVGYRDSKLVRMDILVNGEPVDALSSIVHKTKAEERGRVIIEKLKDLIPRHQFMIPLQAAIGSKVVARESISALRKNVTAKCYGGDISRKKKLLEKQKEGKKRMKQIGNVEIPQEAFLSILKTGD</sequence>
<reference key="1">
    <citation type="journal article" date="2008" name="PLoS ONE">
        <title>Genome sequence of the saprophyte Leptospira biflexa provides insights into the evolution of Leptospira and the pathogenesis of leptospirosis.</title>
        <authorList>
            <person name="Picardeau M."/>
            <person name="Bulach D.M."/>
            <person name="Bouchier C."/>
            <person name="Zuerner R.L."/>
            <person name="Zidane N."/>
            <person name="Wilson P.J."/>
            <person name="Creno S."/>
            <person name="Kuczek E.S."/>
            <person name="Bommezzadri S."/>
            <person name="Davis J.C."/>
            <person name="McGrath A."/>
            <person name="Johnson M.J."/>
            <person name="Boursaux-Eude C."/>
            <person name="Seemann T."/>
            <person name="Rouy Z."/>
            <person name="Coppel R.L."/>
            <person name="Rood J.I."/>
            <person name="Lajus A."/>
            <person name="Davies J.K."/>
            <person name="Medigue C."/>
            <person name="Adler B."/>
        </authorList>
    </citation>
    <scope>NUCLEOTIDE SEQUENCE [LARGE SCALE GENOMIC DNA]</scope>
    <source>
        <strain>Patoc 1 / Ames</strain>
    </source>
</reference>
<dbReference type="EC" id="3.6.5.n1" evidence="1"/>
<dbReference type="EMBL" id="CP000777">
    <property type="protein sequence ID" value="ABZ94158.1"/>
    <property type="molecule type" value="Genomic_DNA"/>
</dbReference>
<dbReference type="RefSeq" id="WP_012388687.1">
    <property type="nucleotide sequence ID" value="NC_010842.1"/>
</dbReference>
<dbReference type="SMR" id="B0S8S7"/>
<dbReference type="KEGG" id="lbf:LBF_1651"/>
<dbReference type="HOGENOM" id="CLU_009995_3_3_12"/>
<dbReference type="GO" id="GO:0005886">
    <property type="term" value="C:plasma membrane"/>
    <property type="evidence" value="ECO:0007669"/>
    <property type="project" value="UniProtKB-SubCell"/>
</dbReference>
<dbReference type="GO" id="GO:0005525">
    <property type="term" value="F:GTP binding"/>
    <property type="evidence" value="ECO:0007669"/>
    <property type="project" value="UniProtKB-UniRule"/>
</dbReference>
<dbReference type="GO" id="GO:0003924">
    <property type="term" value="F:GTPase activity"/>
    <property type="evidence" value="ECO:0007669"/>
    <property type="project" value="UniProtKB-UniRule"/>
</dbReference>
<dbReference type="GO" id="GO:0043022">
    <property type="term" value="F:ribosome binding"/>
    <property type="evidence" value="ECO:0007669"/>
    <property type="project" value="UniProtKB-UniRule"/>
</dbReference>
<dbReference type="GO" id="GO:0003746">
    <property type="term" value="F:translation elongation factor activity"/>
    <property type="evidence" value="ECO:0007669"/>
    <property type="project" value="UniProtKB-UniRule"/>
</dbReference>
<dbReference type="GO" id="GO:0045727">
    <property type="term" value="P:positive regulation of translation"/>
    <property type="evidence" value="ECO:0007669"/>
    <property type="project" value="UniProtKB-UniRule"/>
</dbReference>
<dbReference type="CDD" id="cd03699">
    <property type="entry name" value="EF4_II"/>
    <property type="match status" value="1"/>
</dbReference>
<dbReference type="CDD" id="cd16260">
    <property type="entry name" value="EF4_III"/>
    <property type="match status" value="1"/>
</dbReference>
<dbReference type="CDD" id="cd01890">
    <property type="entry name" value="LepA"/>
    <property type="match status" value="1"/>
</dbReference>
<dbReference type="CDD" id="cd03709">
    <property type="entry name" value="lepA_C"/>
    <property type="match status" value="1"/>
</dbReference>
<dbReference type="FunFam" id="3.40.50.300:FF:000078">
    <property type="entry name" value="Elongation factor 4"/>
    <property type="match status" value="1"/>
</dbReference>
<dbReference type="FunFam" id="2.40.30.10:FF:000015">
    <property type="entry name" value="Translation factor GUF1, mitochondrial"/>
    <property type="match status" value="1"/>
</dbReference>
<dbReference type="FunFam" id="3.30.70.240:FF:000007">
    <property type="entry name" value="Translation factor GUF1, mitochondrial"/>
    <property type="match status" value="1"/>
</dbReference>
<dbReference type="FunFam" id="3.30.70.2570:FF:000001">
    <property type="entry name" value="Translation factor GUF1, mitochondrial"/>
    <property type="match status" value="1"/>
</dbReference>
<dbReference type="FunFam" id="3.30.70.870:FF:000004">
    <property type="entry name" value="Translation factor GUF1, mitochondrial"/>
    <property type="match status" value="1"/>
</dbReference>
<dbReference type="Gene3D" id="3.30.70.240">
    <property type="match status" value="1"/>
</dbReference>
<dbReference type="Gene3D" id="3.30.70.2570">
    <property type="entry name" value="Elongation factor 4, C-terminal domain"/>
    <property type="match status" value="1"/>
</dbReference>
<dbReference type="Gene3D" id="3.30.70.870">
    <property type="entry name" value="Elongation Factor G (Translational Gtpase), domain 3"/>
    <property type="match status" value="1"/>
</dbReference>
<dbReference type="Gene3D" id="3.40.50.300">
    <property type="entry name" value="P-loop containing nucleotide triphosphate hydrolases"/>
    <property type="match status" value="1"/>
</dbReference>
<dbReference type="Gene3D" id="2.40.30.10">
    <property type="entry name" value="Translation factors"/>
    <property type="match status" value="1"/>
</dbReference>
<dbReference type="HAMAP" id="MF_00071">
    <property type="entry name" value="LepA"/>
    <property type="match status" value="1"/>
</dbReference>
<dbReference type="InterPro" id="IPR006297">
    <property type="entry name" value="EF-4"/>
</dbReference>
<dbReference type="InterPro" id="IPR035647">
    <property type="entry name" value="EFG_III/V"/>
</dbReference>
<dbReference type="InterPro" id="IPR000640">
    <property type="entry name" value="EFG_V-like"/>
</dbReference>
<dbReference type="InterPro" id="IPR004161">
    <property type="entry name" value="EFTu-like_2"/>
</dbReference>
<dbReference type="InterPro" id="IPR031157">
    <property type="entry name" value="G_TR_CS"/>
</dbReference>
<dbReference type="InterPro" id="IPR038363">
    <property type="entry name" value="LepA_C_sf"/>
</dbReference>
<dbReference type="InterPro" id="IPR013842">
    <property type="entry name" value="LepA_CTD"/>
</dbReference>
<dbReference type="InterPro" id="IPR035654">
    <property type="entry name" value="LepA_IV"/>
</dbReference>
<dbReference type="InterPro" id="IPR027417">
    <property type="entry name" value="P-loop_NTPase"/>
</dbReference>
<dbReference type="InterPro" id="IPR005225">
    <property type="entry name" value="Small_GTP-bd"/>
</dbReference>
<dbReference type="InterPro" id="IPR000795">
    <property type="entry name" value="T_Tr_GTP-bd_dom"/>
</dbReference>
<dbReference type="InterPro" id="IPR009000">
    <property type="entry name" value="Transl_B-barrel_sf"/>
</dbReference>
<dbReference type="NCBIfam" id="TIGR01393">
    <property type="entry name" value="lepA"/>
    <property type="match status" value="1"/>
</dbReference>
<dbReference type="NCBIfam" id="TIGR00231">
    <property type="entry name" value="small_GTP"/>
    <property type="match status" value="1"/>
</dbReference>
<dbReference type="PANTHER" id="PTHR43512:SF4">
    <property type="entry name" value="TRANSLATION FACTOR GUF1 HOMOLOG, CHLOROPLASTIC"/>
    <property type="match status" value="1"/>
</dbReference>
<dbReference type="PANTHER" id="PTHR43512">
    <property type="entry name" value="TRANSLATION FACTOR GUF1-RELATED"/>
    <property type="match status" value="1"/>
</dbReference>
<dbReference type="Pfam" id="PF00679">
    <property type="entry name" value="EFG_C"/>
    <property type="match status" value="1"/>
</dbReference>
<dbReference type="Pfam" id="PF00009">
    <property type="entry name" value="GTP_EFTU"/>
    <property type="match status" value="1"/>
</dbReference>
<dbReference type="Pfam" id="PF03144">
    <property type="entry name" value="GTP_EFTU_D2"/>
    <property type="match status" value="1"/>
</dbReference>
<dbReference type="Pfam" id="PF06421">
    <property type="entry name" value="LepA_C"/>
    <property type="match status" value="1"/>
</dbReference>
<dbReference type="PRINTS" id="PR00315">
    <property type="entry name" value="ELONGATNFCT"/>
</dbReference>
<dbReference type="SUPFAM" id="SSF54980">
    <property type="entry name" value="EF-G C-terminal domain-like"/>
    <property type="match status" value="2"/>
</dbReference>
<dbReference type="SUPFAM" id="SSF52540">
    <property type="entry name" value="P-loop containing nucleoside triphosphate hydrolases"/>
    <property type="match status" value="1"/>
</dbReference>
<dbReference type="SUPFAM" id="SSF50447">
    <property type="entry name" value="Translation proteins"/>
    <property type="match status" value="1"/>
</dbReference>
<dbReference type="PROSITE" id="PS00301">
    <property type="entry name" value="G_TR_1"/>
    <property type="match status" value="1"/>
</dbReference>
<dbReference type="PROSITE" id="PS51722">
    <property type="entry name" value="G_TR_2"/>
    <property type="match status" value="1"/>
</dbReference>
<comment type="function">
    <text evidence="1">Required for accurate and efficient protein synthesis under certain stress conditions. May act as a fidelity factor of the translation reaction, by catalyzing a one-codon backward translocation of tRNAs on improperly translocated ribosomes. Back-translocation proceeds from a post-translocation (POST) complex to a pre-translocation (PRE) complex, thus giving elongation factor G a second chance to translocate the tRNAs correctly. Binds to ribosomes in a GTP-dependent manner.</text>
</comment>
<comment type="catalytic activity">
    <reaction evidence="1">
        <text>GTP + H2O = GDP + phosphate + H(+)</text>
        <dbReference type="Rhea" id="RHEA:19669"/>
        <dbReference type="ChEBI" id="CHEBI:15377"/>
        <dbReference type="ChEBI" id="CHEBI:15378"/>
        <dbReference type="ChEBI" id="CHEBI:37565"/>
        <dbReference type="ChEBI" id="CHEBI:43474"/>
        <dbReference type="ChEBI" id="CHEBI:58189"/>
        <dbReference type="EC" id="3.6.5.n1"/>
    </reaction>
</comment>
<comment type="subcellular location">
    <subcellularLocation>
        <location evidence="1">Cell inner membrane</location>
        <topology evidence="1">Peripheral membrane protein</topology>
        <orientation evidence="1">Cytoplasmic side</orientation>
    </subcellularLocation>
</comment>
<comment type="similarity">
    <text evidence="1">Belongs to the TRAFAC class translation factor GTPase superfamily. Classic translation factor GTPase family. LepA subfamily.</text>
</comment>